<keyword id="KW-0687">Ribonucleoprotein</keyword>
<keyword id="KW-0689">Ribosomal protein</keyword>
<keyword id="KW-0694">RNA-binding</keyword>
<keyword id="KW-0699">rRNA-binding</keyword>
<protein>
    <recommendedName>
        <fullName evidence="1">Large ribosomal subunit protein uL23</fullName>
    </recommendedName>
    <alternativeName>
        <fullName evidence="2">50S ribosomal protein L23</fullName>
    </alternativeName>
</protein>
<proteinExistence type="inferred from homology"/>
<organism>
    <name type="scientific">Clostridium perfringens (strain SM101 / Type A)</name>
    <dbReference type="NCBI Taxonomy" id="289380"/>
    <lineage>
        <taxon>Bacteria</taxon>
        <taxon>Bacillati</taxon>
        <taxon>Bacillota</taxon>
        <taxon>Clostridia</taxon>
        <taxon>Eubacteriales</taxon>
        <taxon>Clostridiaceae</taxon>
        <taxon>Clostridium</taxon>
    </lineage>
</organism>
<reference key="1">
    <citation type="journal article" date="2006" name="Genome Res.">
        <title>Skewed genomic variability in strains of the toxigenic bacterial pathogen, Clostridium perfringens.</title>
        <authorList>
            <person name="Myers G.S.A."/>
            <person name="Rasko D.A."/>
            <person name="Cheung J.K."/>
            <person name="Ravel J."/>
            <person name="Seshadri R."/>
            <person name="DeBoy R.T."/>
            <person name="Ren Q."/>
            <person name="Varga J."/>
            <person name="Awad M.M."/>
            <person name="Brinkac L.M."/>
            <person name="Daugherty S.C."/>
            <person name="Haft D.H."/>
            <person name="Dodson R.J."/>
            <person name="Madupu R."/>
            <person name="Nelson W.C."/>
            <person name="Rosovitz M.J."/>
            <person name="Sullivan S.A."/>
            <person name="Khouri H."/>
            <person name="Dimitrov G.I."/>
            <person name="Watkins K.L."/>
            <person name="Mulligan S."/>
            <person name="Benton J."/>
            <person name="Radune D."/>
            <person name="Fisher D.J."/>
            <person name="Atkins H.S."/>
            <person name="Hiscox T."/>
            <person name="Jost B.H."/>
            <person name="Billington S.J."/>
            <person name="Songer J.G."/>
            <person name="McClane B.A."/>
            <person name="Titball R.W."/>
            <person name="Rood J.I."/>
            <person name="Melville S.B."/>
            <person name="Paulsen I.T."/>
        </authorList>
    </citation>
    <scope>NUCLEOTIDE SEQUENCE [LARGE SCALE GENOMIC DNA]</scope>
    <source>
        <strain>SM101 / Type A</strain>
    </source>
</reference>
<evidence type="ECO:0000255" key="1">
    <source>
        <dbReference type="HAMAP-Rule" id="MF_01369"/>
    </source>
</evidence>
<evidence type="ECO:0000305" key="2"/>
<comment type="function">
    <text evidence="1">One of the early assembly proteins it binds 23S rRNA. One of the proteins that surrounds the polypeptide exit tunnel on the outside of the ribosome. Forms the main docking site for trigger factor binding to the ribosome.</text>
</comment>
<comment type="subunit">
    <text evidence="1">Part of the 50S ribosomal subunit. Contacts protein L29, and trigger factor when it is bound to the ribosome.</text>
</comment>
<comment type="similarity">
    <text evidence="1">Belongs to the universal ribosomal protein uL23 family.</text>
</comment>
<gene>
    <name evidence="1" type="primary">rplW</name>
    <name type="ordered locus">CPR_2397</name>
</gene>
<feature type="chain" id="PRO_0000272734" description="Large ribosomal subunit protein uL23">
    <location>
        <begin position="1"/>
        <end position="97"/>
    </location>
</feature>
<accession>Q0SQE6</accession>
<sequence length="97" mass="10957">MKLTSHDIIRKPVITEKSMAAMAENKYTFIVHMAANKVQIKRAVEEVFNVKVADVKTMRFEGKTKRVGVHIGKRADFKKAVITLAEGSSIEFFEGMQ</sequence>
<dbReference type="EMBL" id="CP000312">
    <property type="protein sequence ID" value="ABG85994.1"/>
    <property type="molecule type" value="Genomic_DNA"/>
</dbReference>
<dbReference type="RefSeq" id="WP_003454311.1">
    <property type="nucleotide sequence ID" value="NZ_CAXVKH010000004.1"/>
</dbReference>
<dbReference type="SMR" id="Q0SQE6"/>
<dbReference type="GeneID" id="93001011"/>
<dbReference type="KEGG" id="cpr:CPR_2397"/>
<dbReference type="Proteomes" id="UP000001824">
    <property type="component" value="Chromosome"/>
</dbReference>
<dbReference type="GO" id="GO:1990904">
    <property type="term" value="C:ribonucleoprotein complex"/>
    <property type="evidence" value="ECO:0007669"/>
    <property type="project" value="UniProtKB-KW"/>
</dbReference>
<dbReference type="GO" id="GO:0005840">
    <property type="term" value="C:ribosome"/>
    <property type="evidence" value="ECO:0007669"/>
    <property type="project" value="UniProtKB-KW"/>
</dbReference>
<dbReference type="GO" id="GO:0019843">
    <property type="term" value="F:rRNA binding"/>
    <property type="evidence" value="ECO:0007669"/>
    <property type="project" value="UniProtKB-UniRule"/>
</dbReference>
<dbReference type="GO" id="GO:0003735">
    <property type="term" value="F:structural constituent of ribosome"/>
    <property type="evidence" value="ECO:0007669"/>
    <property type="project" value="InterPro"/>
</dbReference>
<dbReference type="GO" id="GO:0006412">
    <property type="term" value="P:translation"/>
    <property type="evidence" value="ECO:0007669"/>
    <property type="project" value="UniProtKB-UniRule"/>
</dbReference>
<dbReference type="FunFam" id="3.30.70.330:FF:000001">
    <property type="entry name" value="50S ribosomal protein L23"/>
    <property type="match status" value="1"/>
</dbReference>
<dbReference type="Gene3D" id="3.30.70.330">
    <property type="match status" value="1"/>
</dbReference>
<dbReference type="HAMAP" id="MF_01369_B">
    <property type="entry name" value="Ribosomal_uL23_B"/>
    <property type="match status" value="1"/>
</dbReference>
<dbReference type="InterPro" id="IPR012677">
    <property type="entry name" value="Nucleotide-bd_a/b_plait_sf"/>
</dbReference>
<dbReference type="InterPro" id="IPR013025">
    <property type="entry name" value="Ribosomal_uL23-like"/>
</dbReference>
<dbReference type="InterPro" id="IPR012678">
    <property type="entry name" value="Ribosomal_uL23/eL15/eS24_sf"/>
</dbReference>
<dbReference type="InterPro" id="IPR001014">
    <property type="entry name" value="Ribosomal_uL23_CS"/>
</dbReference>
<dbReference type="NCBIfam" id="NF004363">
    <property type="entry name" value="PRK05738.2-4"/>
    <property type="match status" value="1"/>
</dbReference>
<dbReference type="NCBIfam" id="NF004366">
    <property type="entry name" value="PRK05738.3-2"/>
    <property type="match status" value="1"/>
</dbReference>
<dbReference type="PANTHER" id="PTHR11620">
    <property type="entry name" value="60S RIBOSOMAL PROTEIN L23A"/>
    <property type="match status" value="1"/>
</dbReference>
<dbReference type="Pfam" id="PF00276">
    <property type="entry name" value="Ribosomal_L23"/>
    <property type="match status" value="1"/>
</dbReference>
<dbReference type="SUPFAM" id="SSF54189">
    <property type="entry name" value="Ribosomal proteins S24e, L23 and L15e"/>
    <property type="match status" value="1"/>
</dbReference>
<dbReference type="PROSITE" id="PS00050">
    <property type="entry name" value="RIBOSOMAL_L23"/>
    <property type="match status" value="1"/>
</dbReference>
<name>RL23_CLOPS</name>